<protein>
    <recommendedName>
        <fullName evidence="1">Large ribosomal subunit protein bL20</fullName>
    </recommendedName>
    <alternativeName>
        <fullName evidence="2">50S ribosomal protein L20</fullName>
    </alternativeName>
</protein>
<dbReference type="EMBL" id="AP009153">
    <property type="protein sequence ID" value="BAH38918.1"/>
    <property type="molecule type" value="Genomic_DNA"/>
</dbReference>
<dbReference type="RefSeq" id="WP_012683365.1">
    <property type="nucleotide sequence ID" value="NC_012489.1"/>
</dbReference>
<dbReference type="SMR" id="C1A493"/>
<dbReference type="STRING" id="379066.GAU_1876"/>
<dbReference type="KEGG" id="gau:GAU_1876"/>
<dbReference type="eggNOG" id="COG0292">
    <property type="taxonomic scope" value="Bacteria"/>
</dbReference>
<dbReference type="HOGENOM" id="CLU_123265_0_1_0"/>
<dbReference type="OrthoDB" id="9808966at2"/>
<dbReference type="Proteomes" id="UP000002209">
    <property type="component" value="Chromosome"/>
</dbReference>
<dbReference type="GO" id="GO:1990904">
    <property type="term" value="C:ribonucleoprotein complex"/>
    <property type="evidence" value="ECO:0007669"/>
    <property type="project" value="UniProtKB-KW"/>
</dbReference>
<dbReference type="GO" id="GO:0005840">
    <property type="term" value="C:ribosome"/>
    <property type="evidence" value="ECO:0007669"/>
    <property type="project" value="UniProtKB-KW"/>
</dbReference>
<dbReference type="GO" id="GO:0019843">
    <property type="term" value="F:rRNA binding"/>
    <property type="evidence" value="ECO:0007669"/>
    <property type="project" value="UniProtKB-UniRule"/>
</dbReference>
<dbReference type="GO" id="GO:0003735">
    <property type="term" value="F:structural constituent of ribosome"/>
    <property type="evidence" value="ECO:0007669"/>
    <property type="project" value="InterPro"/>
</dbReference>
<dbReference type="GO" id="GO:0000027">
    <property type="term" value="P:ribosomal large subunit assembly"/>
    <property type="evidence" value="ECO:0007669"/>
    <property type="project" value="UniProtKB-UniRule"/>
</dbReference>
<dbReference type="GO" id="GO:0006412">
    <property type="term" value="P:translation"/>
    <property type="evidence" value="ECO:0007669"/>
    <property type="project" value="InterPro"/>
</dbReference>
<dbReference type="CDD" id="cd07026">
    <property type="entry name" value="Ribosomal_L20"/>
    <property type="match status" value="1"/>
</dbReference>
<dbReference type="FunFam" id="1.10.1900.20:FF:000001">
    <property type="entry name" value="50S ribosomal protein L20"/>
    <property type="match status" value="1"/>
</dbReference>
<dbReference type="Gene3D" id="6.10.160.10">
    <property type="match status" value="1"/>
</dbReference>
<dbReference type="Gene3D" id="1.10.1900.20">
    <property type="entry name" value="Ribosomal protein L20"/>
    <property type="match status" value="1"/>
</dbReference>
<dbReference type="HAMAP" id="MF_00382">
    <property type="entry name" value="Ribosomal_bL20"/>
    <property type="match status" value="1"/>
</dbReference>
<dbReference type="InterPro" id="IPR005813">
    <property type="entry name" value="Ribosomal_bL20"/>
</dbReference>
<dbReference type="InterPro" id="IPR049946">
    <property type="entry name" value="RIBOSOMAL_L20_CS"/>
</dbReference>
<dbReference type="InterPro" id="IPR035566">
    <property type="entry name" value="Ribosomal_protein_bL20_C"/>
</dbReference>
<dbReference type="NCBIfam" id="TIGR01032">
    <property type="entry name" value="rplT_bact"/>
    <property type="match status" value="1"/>
</dbReference>
<dbReference type="PANTHER" id="PTHR10986">
    <property type="entry name" value="39S RIBOSOMAL PROTEIN L20"/>
    <property type="match status" value="1"/>
</dbReference>
<dbReference type="Pfam" id="PF00453">
    <property type="entry name" value="Ribosomal_L20"/>
    <property type="match status" value="1"/>
</dbReference>
<dbReference type="PRINTS" id="PR00062">
    <property type="entry name" value="RIBOSOMALL20"/>
</dbReference>
<dbReference type="SUPFAM" id="SSF74731">
    <property type="entry name" value="Ribosomal protein L20"/>
    <property type="match status" value="1"/>
</dbReference>
<dbReference type="PROSITE" id="PS00937">
    <property type="entry name" value="RIBOSOMAL_L20"/>
    <property type="match status" value="1"/>
</dbReference>
<name>RL20_GEMAT</name>
<keyword id="KW-1185">Reference proteome</keyword>
<keyword id="KW-0687">Ribonucleoprotein</keyword>
<keyword id="KW-0689">Ribosomal protein</keyword>
<keyword id="KW-0694">RNA-binding</keyword>
<keyword id="KW-0699">rRNA-binding</keyword>
<accession>C1A493</accession>
<sequence length="124" mass="14154">MPRVKSNVVRLKRKKQILKHAKGAFGGRSKLWKAAKETVERGWRYAYRDRKNKKRDFRRLWIVRINAAARLHDMSYNAFINGLHASGIEVDRKVLADLAVREPEAFAAIAEQAKKALDAKVAAA</sequence>
<organism>
    <name type="scientific">Gemmatimonas aurantiaca (strain DSM 14586 / JCM 11422 / NBRC 100505 / T-27)</name>
    <dbReference type="NCBI Taxonomy" id="379066"/>
    <lineage>
        <taxon>Bacteria</taxon>
        <taxon>Pseudomonadati</taxon>
        <taxon>Gemmatimonadota</taxon>
        <taxon>Gemmatimonadia</taxon>
        <taxon>Gemmatimonadales</taxon>
        <taxon>Gemmatimonadaceae</taxon>
        <taxon>Gemmatimonas</taxon>
    </lineage>
</organism>
<reference key="1">
    <citation type="submission" date="2006-03" db="EMBL/GenBank/DDBJ databases">
        <title>Complete genome sequence of Gemmatimonas aurantiaca T-27 that represents a novel phylum Gemmatimonadetes.</title>
        <authorList>
            <person name="Takasaki K."/>
            <person name="Ichikawa N."/>
            <person name="Miura H."/>
            <person name="Matsushita S."/>
            <person name="Watanabe Y."/>
            <person name="Oguchi A."/>
            <person name="Ankai A."/>
            <person name="Yashiro I."/>
            <person name="Takahashi M."/>
            <person name="Terui Y."/>
            <person name="Fukui S."/>
            <person name="Yokoyama H."/>
            <person name="Tanikawa S."/>
            <person name="Hanada S."/>
            <person name="Kamagata Y."/>
            <person name="Fujita N."/>
        </authorList>
    </citation>
    <scope>NUCLEOTIDE SEQUENCE [LARGE SCALE GENOMIC DNA]</scope>
    <source>
        <strain>DSM 14586 / JCM 11422 / NBRC 100505 / T-27</strain>
    </source>
</reference>
<evidence type="ECO:0000255" key="1">
    <source>
        <dbReference type="HAMAP-Rule" id="MF_00382"/>
    </source>
</evidence>
<evidence type="ECO:0000305" key="2"/>
<comment type="function">
    <text evidence="1">Binds directly to 23S ribosomal RNA and is necessary for the in vitro assembly process of the 50S ribosomal subunit. It is not involved in the protein synthesizing functions of that subunit.</text>
</comment>
<comment type="similarity">
    <text evidence="1">Belongs to the bacterial ribosomal protein bL20 family.</text>
</comment>
<proteinExistence type="inferred from homology"/>
<feature type="chain" id="PRO_1000205713" description="Large ribosomal subunit protein bL20">
    <location>
        <begin position="1"/>
        <end position="124"/>
    </location>
</feature>
<gene>
    <name evidence="1" type="primary">rplT</name>
    <name type="ordered locus">GAU_1876</name>
</gene>